<keyword id="KW-0007">Acetylation</keyword>
<keyword id="KW-0067">ATP-binding</keyword>
<keyword id="KW-0436">Ligase</keyword>
<keyword id="KW-0460">Magnesium</keyword>
<keyword id="KW-0479">Metal-binding</keyword>
<keyword id="KW-0547">Nucleotide-binding</keyword>
<feature type="chain" id="PRO_1000164046" description="Acetyl-coenzyme A synthetase">
    <location>
        <begin position="1"/>
        <end position="652"/>
    </location>
</feature>
<feature type="binding site" evidence="1">
    <location>
        <begin position="189"/>
        <end position="192"/>
    </location>
    <ligand>
        <name>CoA</name>
        <dbReference type="ChEBI" id="CHEBI:57287"/>
    </ligand>
</feature>
<feature type="binding site" evidence="1">
    <location>
        <position position="311"/>
    </location>
    <ligand>
        <name>CoA</name>
        <dbReference type="ChEBI" id="CHEBI:57287"/>
    </ligand>
</feature>
<feature type="binding site" evidence="1">
    <location>
        <position position="335"/>
    </location>
    <ligand>
        <name>CoA</name>
        <dbReference type="ChEBI" id="CHEBI:57287"/>
    </ligand>
</feature>
<feature type="binding site" evidence="1">
    <location>
        <begin position="387"/>
        <end position="389"/>
    </location>
    <ligand>
        <name>ATP</name>
        <dbReference type="ChEBI" id="CHEBI:30616"/>
    </ligand>
</feature>
<feature type="binding site" evidence="1">
    <location>
        <begin position="411"/>
        <end position="416"/>
    </location>
    <ligand>
        <name>ATP</name>
        <dbReference type="ChEBI" id="CHEBI:30616"/>
    </ligand>
</feature>
<feature type="binding site" evidence="1">
    <location>
        <position position="500"/>
    </location>
    <ligand>
        <name>ATP</name>
        <dbReference type="ChEBI" id="CHEBI:30616"/>
    </ligand>
</feature>
<feature type="binding site" evidence="1">
    <location>
        <position position="515"/>
    </location>
    <ligand>
        <name>ATP</name>
        <dbReference type="ChEBI" id="CHEBI:30616"/>
    </ligand>
</feature>
<feature type="binding site" evidence="1">
    <location>
        <position position="523"/>
    </location>
    <ligand>
        <name>CoA</name>
        <dbReference type="ChEBI" id="CHEBI:57287"/>
    </ligand>
</feature>
<feature type="binding site" evidence="1">
    <location>
        <position position="526"/>
    </location>
    <ligand>
        <name>ATP</name>
        <dbReference type="ChEBI" id="CHEBI:30616"/>
    </ligand>
</feature>
<feature type="binding site" evidence="1">
    <location>
        <position position="537"/>
    </location>
    <ligand>
        <name>Mg(2+)</name>
        <dbReference type="ChEBI" id="CHEBI:18420"/>
    </ligand>
</feature>
<feature type="binding site" evidence="1">
    <location>
        <position position="539"/>
    </location>
    <ligand>
        <name>Mg(2+)</name>
        <dbReference type="ChEBI" id="CHEBI:18420"/>
    </ligand>
</feature>
<feature type="binding site" evidence="1">
    <location>
        <position position="542"/>
    </location>
    <ligand>
        <name>Mg(2+)</name>
        <dbReference type="ChEBI" id="CHEBI:18420"/>
    </ligand>
</feature>
<feature type="binding site">
    <location>
        <position position="584"/>
    </location>
    <ligand>
        <name>CoA</name>
        <dbReference type="ChEBI" id="CHEBI:57287"/>
    </ligand>
</feature>
<feature type="modified residue" description="N6-acetyllysine" evidence="1">
    <location>
        <position position="609"/>
    </location>
</feature>
<sequence>MSEKIHPVTKPVKARALIDQAKYQKWYRQSVEDPDKFWGKHGQRIDWFKPYTKVKNTSFTGKVSIKWFEDGLTNVSYNCIDRHLKKHGDRVAFIWEGDNPYIDKKVTYNELYEHVCRLANVLKKHGVKKGDRVTIYMPMIPEAAYAMLACARIGAVHSVVFGGFSPEALGGRIVDCQSTFVITCDEGLRGGKPIPLKENTDTAIHIAAKQFVTVEKVLVVRRTGGKTGWAPGRDLWYHEETAKVKADCPPVKMKAEDPLFILYTSGSTGKPKGVLHTTGGYLVYAAMTHEYTFDYHPGDIYWCTADVGWVTGHSYIVYGPLANAATSLMFEGVPNYPDQGRFWDIIDKHKVNIFYTAPTAIRSLMGAGDHFVKRSSRSSLRLLGTVGEPINPEAWEWYYKVVGDSRSPIVDTWWQTETGGHMITPLPGATDLKPGSATLPFFGVQPELVDSEGKVLEGAADGNLVIADSWPGQMRTVYGDHERFIQTYFSTYKGKYFTGDGCRRDEDGYYWITGRVDDVLNVSGHRLGTAEVESALVSHKHVSEAAVVGYPHSIKGQGIYCYVTLMVGQEGSDALRQELVKHVRAEIGPIASPDKIQFTPGLPKTRSGKIMRRILRKIAEDDFGALGDTSTLADPAVVDDLIANRQNKADAA</sequence>
<name>ACSA_RHIR8</name>
<protein>
    <recommendedName>
        <fullName evidence="1">Acetyl-coenzyme A synthetase</fullName>
        <shortName evidence="1">AcCoA synthetase</shortName>
        <shortName evidence="1">Acs</shortName>
        <ecNumber evidence="1">6.2.1.1</ecNumber>
    </recommendedName>
    <alternativeName>
        <fullName evidence="1">Acetate--CoA ligase</fullName>
    </alternativeName>
    <alternativeName>
        <fullName evidence="1">Acyl-activating enzyme</fullName>
    </alternativeName>
</protein>
<reference key="1">
    <citation type="journal article" date="2009" name="J. Bacteriol.">
        <title>Genome sequences of three Agrobacterium biovars help elucidate the evolution of multichromosome genomes in bacteria.</title>
        <authorList>
            <person name="Slater S.C."/>
            <person name="Goldman B.S."/>
            <person name="Goodner B."/>
            <person name="Setubal J.C."/>
            <person name="Farrand S.K."/>
            <person name="Nester E.W."/>
            <person name="Burr T.J."/>
            <person name="Banta L."/>
            <person name="Dickerman A.W."/>
            <person name="Paulsen I."/>
            <person name="Otten L."/>
            <person name="Suen G."/>
            <person name="Welch R."/>
            <person name="Almeida N.F."/>
            <person name="Arnold F."/>
            <person name="Burton O.T."/>
            <person name="Du Z."/>
            <person name="Ewing A."/>
            <person name="Godsy E."/>
            <person name="Heisel S."/>
            <person name="Houmiel K.L."/>
            <person name="Jhaveri J."/>
            <person name="Lu J."/>
            <person name="Miller N.M."/>
            <person name="Norton S."/>
            <person name="Chen Q."/>
            <person name="Phoolcharoen W."/>
            <person name="Ohlin V."/>
            <person name="Ondrusek D."/>
            <person name="Pride N."/>
            <person name="Stricklin S.L."/>
            <person name="Sun J."/>
            <person name="Wheeler C."/>
            <person name="Wilson L."/>
            <person name="Zhu H."/>
            <person name="Wood D.W."/>
        </authorList>
    </citation>
    <scope>NUCLEOTIDE SEQUENCE [LARGE SCALE GENOMIC DNA]</scope>
    <source>
        <strain>K84 / ATCC BAA-868</strain>
    </source>
</reference>
<gene>
    <name evidence="1" type="primary">acsA</name>
    <name type="ordered locus">Arad_4932</name>
</gene>
<evidence type="ECO:0000255" key="1">
    <source>
        <dbReference type="HAMAP-Rule" id="MF_01123"/>
    </source>
</evidence>
<organism>
    <name type="scientific">Rhizobium rhizogenes (strain K84 / ATCC BAA-868)</name>
    <name type="common">Agrobacterium radiobacter</name>
    <dbReference type="NCBI Taxonomy" id="311403"/>
    <lineage>
        <taxon>Bacteria</taxon>
        <taxon>Pseudomonadati</taxon>
        <taxon>Pseudomonadota</taxon>
        <taxon>Alphaproteobacteria</taxon>
        <taxon>Hyphomicrobiales</taxon>
        <taxon>Rhizobiaceae</taxon>
        <taxon>Rhizobium/Agrobacterium group</taxon>
        <taxon>Rhizobium</taxon>
    </lineage>
</organism>
<accession>B9JEV4</accession>
<comment type="function">
    <text evidence="1">Catalyzes the conversion of acetate into acetyl-CoA (AcCoA), an essential intermediate at the junction of anabolic and catabolic pathways. AcsA undergoes a two-step reaction. In the first half reaction, AcsA combines acetate with ATP to form acetyl-adenylate (AcAMP) intermediate. In the second half reaction, it can then transfer the acetyl group from AcAMP to the sulfhydryl group of CoA, forming the product AcCoA.</text>
</comment>
<comment type="catalytic activity">
    <reaction evidence="1">
        <text>acetate + ATP + CoA = acetyl-CoA + AMP + diphosphate</text>
        <dbReference type="Rhea" id="RHEA:23176"/>
        <dbReference type="ChEBI" id="CHEBI:30089"/>
        <dbReference type="ChEBI" id="CHEBI:30616"/>
        <dbReference type="ChEBI" id="CHEBI:33019"/>
        <dbReference type="ChEBI" id="CHEBI:57287"/>
        <dbReference type="ChEBI" id="CHEBI:57288"/>
        <dbReference type="ChEBI" id="CHEBI:456215"/>
        <dbReference type="EC" id="6.2.1.1"/>
    </reaction>
</comment>
<comment type="cofactor">
    <cofactor evidence="1">
        <name>Mg(2+)</name>
        <dbReference type="ChEBI" id="CHEBI:18420"/>
    </cofactor>
</comment>
<comment type="PTM">
    <text evidence="1">Acetylated. Deacetylation by the SIR2-homolog deacetylase activates the enzyme.</text>
</comment>
<comment type="similarity">
    <text evidence="1">Belongs to the ATP-dependent AMP-binding enzyme family.</text>
</comment>
<proteinExistence type="inferred from homology"/>
<dbReference type="EC" id="6.2.1.1" evidence="1"/>
<dbReference type="EMBL" id="CP000628">
    <property type="protein sequence ID" value="ACM28523.1"/>
    <property type="molecule type" value="Genomic_DNA"/>
</dbReference>
<dbReference type="RefSeq" id="WP_012652997.1">
    <property type="nucleotide sequence ID" value="NC_011985.1"/>
</dbReference>
<dbReference type="SMR" id="B9JEV4"/>
<dbReference type="STRING" id="311403.Arad_4932"/>
<dbReference type="KEGG" id="ara:Arad_4932"/>
<dbReference type="eggNOG" id="COG0365">
    <property type="taxonomic scope" value="Bacteria"/>
</dbReference>
<dbReference type="HOGENOM" id="CLU_000022_3_6_5"/>
<dbReference type="Proteomes" id="UP000001600">
    <property type="component" value="Chromosome 1"/>
</dbReference>
<dbReference type="GO" id="GO:0005829">
    <property type="term" value="C:cytosol"/>
    <property type="evidence" value="ECO:0007669"/>
    <property type="project" value="TreeGrafter"/>
</dbReference>
<dbReference type="GO" id="GO:0003987">
    <property type="term" value="F:acetate-CoA ligase activity"/>
    <property type="evidence" value="ECO:0007669"/>
    <property type="project" value="UniProtKB-UniRule"/>
</dbReference>
<dbReference type="GO" id="GO:0016208">
    <property type="term" value="F:AMP binding"/>
    <property type="evidence" value="ECO:0007669"/>
    <property type="project" value="InterPro"/>
</dbReference>
<dbReference type="GO" id="GO:0005524">
    <property type="term" value="F:ATP binding"/>
    <property type="evidence" value="ECO:0007669"/>
    <property type="project" value="UniProtKB-KW"/>
</dbReference>
<dbReference type="GO" id="GO:0046872">
    <property type="term" value="F:metal ion binding"/>
    <property type="evidence" value="ECO:0007669"/>
    <property type="project" value="UniProtKB-KW"/>
</dbReference>
<dbReference type="GO" id="GO:0019427">
    <property type="term" value="P:acetyl-CoA biosynthetic process from acetate"/>
    <property type="evidence" value="ECO:0007669"/>
    <property type="project" value="InterPro"/>
</dbReference>
<dbReference type="CDD" id="cd05966">
    <property type="entry name" value="ACS"/>
    <property type="match status" value="1"/>
</dbReference>
<dbReference type="FunFam" id="3.30.300.30:FF:000004">
    <property type="entry name" value="Acetyl-coenzyme A synthetase"/>
    <property type="match status" value="1"/>
</dbReference>
<dbReference type="FunFam" id="3.40.50.12780:FF:000001">
    <property type="entry name" value="Acetyl-coenzyme A synthetase"/>
    <property type="match status" value="1"/>
</dbReference>
<dbReference type="Gene3D" id="3.30.300.30">
    <property type="match status" value="1"/>
</dbReference>
<dbReference type="Gene3D" id="3.40.50.12780">
    <property type="entry name" value="N-terminal domain of ligase-like"/>
    <property type="match status" value="1"/>
</dbReference>
<dbReference type="HAMAP" id="MF_01123">
    <property type="entry name" value="Ac_CoA_synth"/>
    <property type="match status" value="1"/>
</dbReference>
<dbReference type="InterPro" id="IPR011904">
    <property type="entry name" value="Ac_CoA_lig"/>
</dbReference>
<dbReference type="InterPro" id="IPR032387">
    <property type="entry name" value="ACAS_N"/>
</dbReference>
<dbReference type="InterPro" id="IPR025110">
    <property type="entry name" value="AMP-bd_C"/>
</dbReference>
<dbReference type="InterPro" id="IPR045851">
    <property type="entry name" value="AMP-bd_C_sf"/>
</dbReference>
<dbReference type="InterPro" id="IPR020845">
    <property type="entry name" value="AMP-binding_CS"/>
</dbReference>
<dbReference type="InterPro" id="IPR000873">
    <property type="entry name" value="AMP-dep_synth/lig_dom"/>
</dbReference>
<dbReference type="InterPro" id="IPR042099">
    <property type="entry name" value="ANL_N_sf"/>
</dbReference>
<dbReference type="NCBIfam" id="TIGR02188">
    <property type="entry name" value="Ac_CoA_lig_AcsA"/>
    <property type="match status" value="1"/>
</dbReference>
<dbReference type="NCBIfam" id="NF001208">
    <property type="entry name" value="PRK00174.1"/>
    <property type="match status" value="1"/>
</dbReference>
<dbReference type="PANTHER" id="PTHR24095">
    <property type="entry name" value="ACETYL-COENZYME A SYNTHETASE"/>
    <property type="match status" value="1"/>
</dbReference>
<dbReference type="PANTHER" id="PTHR24095:SF14">
    <property type="entry name" value="ACETYL-COENZYME A SYNTHETASE 1"/>
    <property type="match status" value="1"/>
</dbReference>
<dbReference type="Pfam" id="PF16177">
    <property type="entry name" value="ACAS_N"/>
    <property type="match status" value="1"/>
</dbReference>
<dbReference type="Pfam" id="PF00501">
    <property type="entry name" value="AMP-binding"/>
    <property type="match status" value="1"/>
</dbReference>
<dbReference type="Pfam" id="PF13193">
    <property type="entry name" value="AMP-binding_C"/>
    <property type="match status" value="1"/>
</dbReference>
<dbReference type="SUPFAM" id="SSF56801">
    <property type="entry name" value="Acetyl-CoA synthetase-like"/>
    <property type="match status" value="1"/>
</dbReference>
<dbReference type="PROSITE" id="PS00455">
    <property type="entry name" value="AMP_BINDING"/>
    <property type="match status" value="1"/>
</dbReference>